<protein>
    <recommendedName>
        <fullName evidence="1">Aliphatic sulfonates import ATP-binding protein SsuB</fullName>
        <ecNumber evidence="1">7.6.2.14</ecNumber>
    </recommendedName>
</protein>
<comment type="function">
    <text evidence="1">Part of the ABC transporter complex SsuABC involved in aliphatic sulfonates import. Responsible for energy coupling to the transport system.</text>
</comment>
<comment type="catalytic activity">
    <reaction evidence="1">
        <text>ATP + H2O + aliphatic sulfonate-[sulfonate-binding protein]Side 1 = ADP + phosphate + aliphatic sulfonateSide 2 + [sulfonate-binding protein]Side 1.</text>
        <dbReference type="EC" id="7.6.2.14"/>
    </reaction>
</comment>
<comment type="subunit">
    <text evidence="1">The complex is composed of two ATP-binding proteins (SsuB), two transmembrane proteins (SsuC) and a solute-binding protein (SsuA).</text>
</comment>
<comment type="subcellular location">
    <subcellularLocation>
        <location evidence="1">Cell inner membrane</location>
        <topology evidence="1">Peripheral membrane protein</topology>
    </subcellularLocation>
</comment>
<comment type="similarity">
    <text evidence="1">Belongs to the ABC transporter superfamily. Aliphatic sulfonates importer (TC 3.A.1.17.2) family.</text>
</comment>
<organism>
    <name type="scientific">Rhodopseudomonas palustris (strain BisA53)</name>
    <dbReference type="NCBI Taxonomy" id="316055"/>
    <lineage>
        <taxon>Bacteria</taxon>
        <taxon>Pseudomonadati</taxon>
        <taxon>Pseudomonadota</taxon>
        <taxon>Alphaproteobacteria</taxon>
        <taxon>Hyphomicrobiales</taxon>
        <taxon>Nitrobacteraceae</taxon>
        <taxon>Rhodopseudomonas</taxon>
    </lineage>
</organism>
<keyword id="KW-0067">ATP-binding</keyword>
<keyword id="KW-0997">Cell inner membrane</keyword>
<keyword id="KW-1003">Cell membrane</keyword>
<keyword id="KW-0472">Membrane</keyword>
<keyword id="KW-0547">Nucleotide-binding</keyword>
<keyword id="KW-1278">Translocase</keyword>
<keyword id="KW-0813">Transport</keyword>
<name>SSUB_RHOP5</name>
<feature type="chain" id="PRO_0000279959" description="Aliphatic sulfonates import ATP-binding protein SsuB">
    <location>
        <begin position="1"/>
        <end position="281"/>
    </location>
</feature>
<feature type="domain" description="ABC transporter" evidence="1">
    <location>
        <begin position="40"/>
        <end position="263"/>
    </location>
</feature>
<feature type="binding site" evidence="1">
    <location>
        <begin position="72"/>
        <end position="79"/>
    </location>
    <ligand>
        <name>ATP</name>
        <dbReference type="ChEBI" id="CHEBI:30616"/>
    </ligand>
</feature>
<reference key="1">
    <citation type="submission" date="2006-09" db="EMBL/GenBank/DDBJ databases">
        <title>Complete sequence of Rhodopseudomonas palustris BisA53.</title>
        <authorList>
            <consortium name="US DOE Joint Genome Institute"/>
            <person name="Copeland A."/>
            <person name="Lucas S."/>
            <person name="Lapidus A."/>
            <person name="Barry K."/>
            <person name="Detter J.C."/>
            <person name="Glavina del Rio T."/>
            <person name="Hammon N."/>
            <person name="Israni S."/>
            <person name="Dalin E."/>
            <person name="Tice H."/>
            <person name="Pitluck S."/>
            <person name="Chain P."/>
            <person name="Malfatti S."/>
            <person name="Shin M."/>
            <person name="Vergez L."/>
            <person name="Schmutz J."/>
            <person name="Larimer F."/>
            <person name="Land M."/>
            <person name="Hauser L."/>
            <person name="Pelletier D.A."/>
            <person name="Kyrpides N."/>
            <person name="Kim E."/>
            <person name="Harwood C.S."/>
            <person name="Oda Y."/>
            <person name="Richardson P."/>
        </authorList>
    </citation>
    <scope>NUCLEOTIDE SEQUENCE [LARGE SCALE GENOMIC DNA]</scope>
    <source>
        <strain>BisA53</strain>
    </source>
</reference>
<accession>Q07LQ4</accession>
<dbReference type="EC" id="7.6.2.14" evidence="1"/>
<dbReference type="EMBL" id="CP000463">
    <property type="protein sequence ID" value="ABJ07130.1"/>
    <property type="molecule type" value="Genomic_DNA"/>
</dbReference>
<dbReference type="SMR" id="Q07LQ4"/>
<dbReference type="STRING" id="316055.RPE_3195"/>
<dbReference type="KEGG" id="rpe:RPE_3195"/>
<dbReference type="eggNOG" id="COG1116">
    <property type="taxonomic scope" value="Bacteria"/>
</dbReference>
<dbReference type="HOGENOM" id="CLU_000604_1_22_5"/>
<dbReference type="OrthoDB" id="9797536at2"/>
<dbReference type="GO" id="GO:0005886">
    <property type="term" value="C:plasma membrane"/>
    <property type="evidence" value="ECO:0007669"/>
    <property type="project" value="UniProtKB-SubCell"/>
</dbReference>
<dbReference type="GO" id="GO:0005524">
    <property type="term" value="F:ATP binding"/>
    <property type="evidence" value="ECO:0007669"/>
    <property type="project" value="UniProtKB-KW"/>
</dbReference>
<dbReference type="GO" id="GO:0016887">
    <property type="term" value="F:ATP hydrolysis activity"/>
    <property type="evidence" value="ECO:0007669"/>
    <property type="project" value="InterPro"/>
</dbReference>
<dbReference type="CDD" id="cd03293">
    <property type="entry name" value="ABC_NrtD_SsuB_transporters"/>
    <property type="match status" value="1"/>
</dbReference>
<dbReference type="FunFam" id="3.40.50.300:FF:000653">
    <property type="entry name" value="Aliphatic sulfonates import ATP-binding protein SsuB"/>
    <property type="match status" value="1"/>
</dbReference>
<dbReference type="Gene3D" id="3.40.50.300">
    <property type="entry name" value="P-loop containing nucleotide triphosphate hydrolases"/>
    <property type="match status" value="1"/>
</dbReference>
<dbReference type="InterPro" id="IPR003593">
    <property type="entry name" value="AAA+_ATPase"/>
</dbReference>
<dbReference type="InterPro" id="IPR003439">
    <property type="entry name" value="ABC_transporter-like_ATP-bd"/>
</dbReference>
<dbReference type="InterPro" id="IPR017871">
    <property type="entry name" value="ABC_transporter-like_CS"/>
</dbReference>
<dbReference type="InterPro" id="IPR050166">
    <property type="entry name" value="ABC_transporter_ATP-bind"/>
</dbReference>
<dbReference type="InterPro" id="IPR027417">
    <property type="entry name" value="P-loop_NTPase"/>
</dbReference>
<dbReference type="PANTHER" id="PTHR42788:SF17">
    <property type="entry name" value="ALIPHATIC SULFONATES IMPORT ATP-BINDING PROTEIN SSUB"/>
    <property type="match status" value="1"/>
</dbReference>
<dbReference type="PANTHER" id="PTHR42788">
    <property type="entry name" value="TAURINE IMPORT ATP-BINDING PROTEIN-RELATED"/>
    <property type="match status" value="1"/>
</dbReference>
<dbReference type="Pfam" id="PF00005">
    <property type="entry name" value="ABC_tran"/>
    <property type="match status" value="1"/>
</dbReference>
<dbReference type="SMART" id="SM00382">
    <property type="entry name" value="AAA"/>
    <property type="match status" value="1"/>
</dbReference>
<dbReference type="SUPFAM" id="SSF52540">
    <property type="entry name" value="P-loop containing nucleoside triphosphate hydrolases"/>
    <property type="match status" value="1"/>
</dbReference>
<dbReference type="PROSITE" id="PS00211">
    <property type="entry name" value="ABC_TRANSPORTER_1"/>
    <property type="match status" value="1"/>
</dbReference>
<dbReference type="PROSITE" id="PS50893">
    <property type="entry name" value="ABC_TRANSPORTER_2"/>
    <property type="match status" value="1"/>
</dbReference>
<dbReference type="PROSITE" id="PS51291">
    <property type="entry name" value="SSUB"/>
    <property type="match status" value="1"/>
</dbReference>
<proteinExistence type="inferred from homology"/>
<gene>
    <name evidence="1" type="primary">ssuB</name>
    <name type="ordered locus">RPE_3195</name>
</gene>
<evidence type="ECO:0000255" key="1">
    <source>
        <dbReference type="HAMAP-Rule" id="MF_01724"/>
    </source>
</evidence>
<sequence length="281" mass="30501">MQEALRLIFSDTRARPSADVEVPGFEADWSAATPSRGLPLTLRNLRKSFGDNSVLRGIDLHIPAGQFVTIVGRSGCGKSTLLRLIAGLDQPTAGNIGFGDDRLPGDVRVMFQEPRLLPWARVLANVEVGLGADRGSPDAKARAEEVLLEVGLTDKRDQWPAVLSGGQKQRVALARALVSRPRVLAFDEPLGALDALTRIAMQQLLERVWRDQGFTAILVTHDVAEAVALADRVLVIEDGRITNDVLIDLPRPRRRGSADLAALEGEILKQLLEGSEDSSEL</sequence>